<organism>
    <name type="scientific">Methanococcus maripaludis (strain DSM 14266 / JCM 13030 / NBRC 101832 / S2 / LL)</name>
    <dbReference type="NCBI Taxonomy" id="267377"/>
    <lineage>
        <taxon>Archaea</taxon>
        <taxon>Methanobacteriati</taxon>
        <taxon>Methanobacteriota</taxon>
        <taxon>Methanomada group</taxon>
        <taxon>Methanococci</taxon>
        <taxon>Methanococcales</taxon>
        <taxon>Methanococcaceae</taxon>
        <taxon>Methanococcus</taxon>
    </lineage>
</organism>
<evidence type="ECO:0000305" key="1"/>
<keyword id="KW-1185">Reference proteome</keyword>
<keyword id="KW-0687">Ribonucleoprotein</keyword>
<keyword id="KW-0689">Ribosomal protein</keyword>
<name>RL32_METMP</name>
<protein>
    <recommendedName>
        <fullName evidence="1">Large ribosomal subunit protein eL32</fullName>
    </recommendedName>
    <alternativeName>
        <fullName>50S ribosomal protein L32e</fullName>
    </alternativeName>
</protein>
<reference key="1">
    <citation type="journal article" date="2004" name="J. Bacteriol.">
        <title>Complete genome sequence of the genetically tractable hydrogenotrophic methanogen Methanococcus maripaludis.</title>
        <authorList>
            <person name="Hendrickson E.L."/>
            <person name="Kaul R."/>
            <person name="Zhou Y."/>
            <person name="Bovee D."/>
            <person name="Chapman P."/>
            <person name="Chung J."/>
            <person name="Conway de Macario E."/>
            <person name="Dodsworth J.A."/>
            <person name="Gillett W."/>
            <person name="Graham D.E."/>
            <person name="Hackett M."/>
            <person name="Haydock A.K."/>
            <person name="Kang A."/>
            <person name="Land M.L."/>
            <person name="Levy R."/>
            <person name="Lie T.J."/>
            <person name="Major T.A."/>
            <person name="Moore B.C."/>
            <person name="Porat I."/>
            <person name="Palmeiri A."/>
            <person name="Rouse G."/>
            <person name="Saenphimmachak C."/>
            <person name="Soell D."/>
            <person name="Van Dien S."/>
            <person name="Wang T."/>
            <person name="Whitman W.B."/>
            <person name="Xia Q."/>
            <person name="Zhang Y."/>
            <person name="Larimer F.W."/>
            <person name="Olson M.V."/>
            <person name="Leigh J.A."/>
        </authorList>
    </citation>
    <scope>NUCLEOTIDE SEQUENCE [LARGE SCALE GENOMIC DNA]</scope>
    <source>
        <strain>DSM 14266 / JCM 13030 / NBRC 101832 / S2 / LL</strain>
    </source>
</reference>
<dbReference type="EMBL" id="BX950229">
    <property type="protein sequence ID" value="CAF30972.1"/>
    <property type="molecule type" value="Genomic_DNA"/>
</dbReference>
<dbReference type="RefSeq" id="WP_011171360.1">
    <property type="nucleotide sequence ID" value="NC_005791.1"/>
</dbReference>
<dbReference type="SMR" id="Q6LXD6"/>
<dbReference type="STRING" id="267377.MMP1416"/>
<dbReference type="EnsemblBacteria" id="CAF30972">
    <property type="protein sequence ID" value="CAF30972"/>
    <property type="gene ID" value="MMP1416"/>
</dbReference>
<dbReference type="KEGG" id="mmp:MMP1416"/>
<dbReference type="PATRIC" id="fig|267377.15.peg.1452"/>
<dbReference type="eggNOG" id="arCOG00781">
    <property type="taxonomic scope" value="Archaea"/>
</dbReference>
<dbReference type="HOGENOM" id="CLU_071479_3_1_2"/>
<dbReference type="OrthoDB" id="372100at2157"/>
<dbReference type="Proteomes" id="UP000000590">
    <property type="component" value="Chromosome"/>
</dbReference>
<dbReference type="GO" id="GO:0022625">
    <property type="term" value="C:cytosolic large ribosomal subunit"/>
    <property type="evidence" value="ECO:0007669"/>
    <property type="project" value="TreeGrafter"/>
</dbReference>
<dbReference type="GO" id="GO:0003735">
    <property type="term" value="F:structural constituent of ribosome"/>
    <property type="evidence" value="ECO:0007669"/>
    <property type="project" value="InterPro"/>
</dbReference>
<dbReference type="GO" id="GO:0006412">
    <property type="term" value="P:translation"/>
    <property type="evidence" value="ECO:0007669"/>
    <property type="project" value="UniProtKB-UniRule"/>
</dbReference>
<dbReference type="CDD" id="cd00513">
    <property type="entry name" value="Ribosomal_L32_L32e"/>
    <property type="match status" value="1"/>
</dbReference>
<dbReference type="HAMAP" id="MF_00810">
    <property type="entry name" value="Ribosomal_eL32"/>
    <property type="match status" value="1"/>
</dbReference>
<dbReference type="InterPro" id="IPR001515">
    <property type="entry name" value="Ribosomal_eL32"/>
</dbReference>
<dbReference type="InterPro" id="IPR023654">
    <property type="entry name" value="Ribosomal_eL32_arc"/>
</dbReference>
<dbReference type="InterPro" id="IPR018263">
    <property type="entry name" value="Ribosomal_eL32_CS"/>
</dbReference>
<dbReference type="InterPro" id="IPR036351">
    <property type="entry name" value="Ribosomal_eL32_sf"/>
</dbReference>
<dbReference type="NCBIfam" id="NF006332">
    <property type="entry name" value="PRK08562.1"/>
    <property type="match status" value="1"/>
</dbReference>
<dbReference type="PANTHER" id="PTHR23413">
    <property type="entry name" value="60S RIBOSOMAL PROTEIN L32 AND DNA-DIRECTED RNA POLYMERASE II, SUBUNIT N"/>
    <property type="match status" value="1"/>
</dbReference>
<dbReference type="PANTHER" id="PTHR23413:SF1">
    <property type="entry name" value="RIBOSOMAL PROTEIN L32"/>
    <property type="match status" value="1"/>
</dbReference>
<dbReference type="Pfam" id="PF01655">
    <property type="entry name" value="Ribosomal_L32e"/>
    <property type="match status" value="1"/>
</dbReference>
<dbReference type="SMART" id="SM01393">
    <property type="entry name" value="Ribosomal_L32e"/>
    <property type="match status" value="1"/>
</dbReference>
<dbReference type="SUPFAM" id="SSF52042">
    <property type="entry name" value="Ribosomal protein L32e"/>
    <property type="match status" value="1"/>
</dbReference>
<dbReference type="PROSITE" id="PS00580">
    <property type="entry name" value="RIBOSOMAL_L32E"/>
    <property type="match status" value="1"/>
</dbReference>
<comment type="similarity">
    <text evidence="1">Belongs to the eukaryotic ribosomal protein eL32 family.</text>
</comment>
<sequence>MSEFKRLMRLKLKMKQKRPEFKRQDWFKCSRIGTSWRRPFGKHSGMRIGLTHRAAVVNTGYRGPVLVRGLHPSGLQDILVNNVKELVALNPEVQGARIAATVGKRKRIEIVKKANELGIRVFNVSKQKQEEFLSL</sequence>
<feature type="chain" id="PRO_0000131154" description="Large ribosomal subunit protein eL32">
    <location>
        <begin position="1"/>
        <end position="135"/>
    </location>
</feature>
<gene>
    <name type="primary">rpl32e</name>
    <name type="ordered locus">MMP1416</name>
</gene>
<accession>Q6LXD6</accession>
<proteinExistence type="inferred from homology"/>